<feature type="chain" id="PRO_0000257564" description="Putative pre-16S rRNA nuclease">
    <location>
        <begin position="1"/>
        <end position="149"/>
    </location>
</feature>
<name>YQGF_PSET1</name>
<reference key="1">
    <citation type="journal article" date="2005" name="Genome Res.">
        <title>Coping with cold: the genome of the versatile marine Antarctica bacterium Pseudoalteromonas haloplanktis TAC125.</title>
        <authorList>
            <person name="Medigue C."/>
            <person name="Krin E."/>
            <person name="Pascal G."/>
            <person name="Barbe V."/>
            <person name="Bernsel A."/>
            <person name="Bertin P.N."/>
            <person name="Cheung F."/>
            <person name="Cruveiller S."/>
            <person name="D'Amico S."/>
            <person name="Duilio A."/>
            <person name="Fang G."/>
            <person name="Feller G."/>
            <person name="Ho C."/>
            <person name="Mangenot S."/>
            <person name="Marino G."/>
            <person name="Nilsson J."/>
            <person name="Parrilli E."/>
            <person name="Rocha E.P.C."/>
            <person name="Rouy Z."/>
            <person name="Sekowska A."/>
            <person name="Tutino M.L."/>
            <person name="Vallenet D."/>
            <person name="von Heijne G."/>
            <person name="Danchin A."/>
        </authorList>
    </citation>
    <scope>NUCLEOTIDE SEQUENCE [LARGE SCALE GENOMIC DNA]</scope>
    <source>
        <strain>TAC 125</strain>
    </source>
</reference>
<organism>
    <name type="scientific">Pseudoalteromonas translucida (strain TAC 125)</name>
    <dbReference type="NCBI Taxonomy" id="326442"/>
    <lineage>
        <taxon>Bacteria</taxon>
        <taxon>Pseudomonadati</taxon>
        <taxon>Pseudomonadota</taxon>
        <taxon>Gammaproteobacteria</taxon>
        <taxon>Alteromonadales</taxon>
        <taxon>Pseudoalteromonadaceae</taxon>
        <taxon>Pseudoalteromonas</taxon>
    </lineage>
</organism>
<proteinExistence type="inferred from homology"/>
<accession>Q3IFA0</accession>
<gene>
    <name type="ordered locus">PSHAa2601</name>
</gene>
<protein>
    <recommendedName>
        <fullName evidence="1">Putative pre-16S rRNA nuclease</fullName>
        <ecNumber evidence="1">3.1.-.-</ecNumber>
    </recommendedName>
</protein>
<dbReference type="EC" id="3.1.-.-" evidence="1"/>
<dbReference type="EMBL" id="CR954246">
    <property type="protein sequence ID" value="CAI87649.1"/>
    <property type="molecule type" value="Genomic_DNA"/>
</dbReference>
<dbReference type="SMR" id="Q3IFA0"/>
<dbReference type="STRING" id="326442.PSHAa2601"/>
<dbReference type="KEGG" id="pha:PSHAa2601"/>
<dbReference type="eggNOG" id="COG0816">
    <property type="taxonomic scope" value="Bacteria"/>
</dbReference>
<dbReference type="HOGENOM" id="CLU_098240_3_0_6"/>
<dbReference type="BioCyc" id="PHAL326442:PSHA_RS12805-MONOMER"/>
<dbReference type="Proteomes" id="UP000006843">
    <property type="component" value="Chromosome I"/>
</dbReference>
<dbReference type="GO" id="GO:0005829">
    <property type="term" value="C:cytosol"/>
    <property type="evidence" value="ECO:0007669"/>
    <property type="project" value="TreeGrafter"/>
</dbReference>
<dbReference type="GO" id="GO:0004518">
    <property type="term" value="F:nuclease activity"/>
    <property type="evidence" value="ECO:0007669"/>
    <property type="project" value="UniProtKB-KW"/>
</dbReference>
<dbReference type="GO" id="GO:0000967">
    <property type="term" value="P:rRNA 5'-end processing"/>
    <property type="evidence" value="ECO:0007669"/>
    <property type="project" value="UniProtKB-UniRule"/>
</dbReference>
<dbReference type="CDD" id="cd16964">
    <property type="entry name" value="YqgF"/>
    <property type="match status" value="1"/>
</dbReference>
<dbReference type="FunFam" id="3.30.420.140:FF:000002">
    <property type="entry name" value="Putative pre-16S rRNA nuclease"/>
    <property type="match status" value="1"/>
</dbReference>
<dbReference type="Gene3D" id="3.30.420.140">
    <property type="entry name" value="YqgF/RNase H-like domain"/>
    <property type="match status" value="1"/>
</dbReference>
<dbReference type="HAMAP" id="MF_00651">
    <property type="entry name" value="Nuclease_YqgF"/>
    <property type="match status" value="1"/>
</dbReference>
<dbReference type="InterPro" id="IPR012337">
    <property type="entry name" value="RNaseH-like_sf"/>
</dbReference>
<dbReference type="InterPro" id="IPR005227">
    <property type="entry name" value="YqgF"/>
</dbReference>
<dbReference type="InterPro" id="IPR006641">
    <property type="entry name" value="YqgF/RNaseH-like_dom"/>
</dbReference>
<dbReference type="InterPro" id="IPR037027">
    <property type="entry name" value="YqgF/RNaseH-like_dom_sf"/>
</dbReference>
<dbReference type="NCBIfam" id="TIGR00250">
    <property type="entry name" value="RNAse_H_YqgF"/>
    <property type="match status" value="1"/>
</dbReference>
<dbReference type="PANTHER" id="PTHR33317">
    <property type="entry name" value="POLYNUCLEOTIDYL TRANSFERASE, RIBONUCLEASE H-LIKE SUPERFAMILY PROTEIN"/>
    <property type="match status" value="1"/>
</dbReference>
<dbReference type="PANTHER" id="PTHR33317:SF4">
    <property type="entry name" value="POLYNUCLEOTIDYL TRANSFERASE, RIBONUCLEASE H-LIKE SUPERFAMILY PROTEIN"/>
    <property type="match status" value="1"/>
</dbReference>
<dbReference type="Pfam" id="PF03652">
    <property type="entry name" value="RuvX"/>
    <property type="match status" value="1"/>
</dbReference>
<dbReference type="SMART" id="SM00732">
    <property type="entry name" value="YqgFc"/>
    <property type="match status" value="1"/>
</dbReference>
<dbReference type="SUPFAM" id="SSF53098">
    <property type="entry name" value="Ribonuclease H-like"/>
    <property type="match status" value="1"/>
</dbReference>
<comment type="function">
    <text evidence="1">Could be a nuclease involved in processing of the 5'-end of pre-16S rRNA.</text>
</comment>
<comment type="subcellular location">
    <subcellularLocation>
        <location evidence="1">Cytoplasm</location>
    </subcellularLocation>
</comment>
<comment type="similarity">
    <text evidence="1">Belongs to the YqgF nuclease family.</text>
</comment>
<evidence type="ECO:0000255" key="1">
    <source>
        <dbReference type="HAMAP-Rule" id="MF_00651"/>
    </source>
</evidence>
<sequence>MTKKNFKPQGQRTVMGFDFGTKSIGIAIGQELTGSASSLKAVKAQDGIPNWDDIAVQVNEWQPDLMVVGLPLNMDGTAQEVTFKAKKFANRLHNHYAIPVETQDERLTTADAKARLFEQGGYKNLGKGKVDNMSAVIILESFFETSYGE</sequence>
<keyword id="KW-0963">Cytoplasm</keyword>
<keyword id="KW-0378">Hydrolase</keyword>
<keyword id="KW-0540">Nuclease</keyword>
<keyword id="KW-1185">Reference proteome</keyword>
<keyword id="KW-0690">Ribosome biogenesis</keyword>